<sequence>MRTGRVTPGLAAGLLLLLLRSFGLVEPSESSGNDPFTIVHENTGKCIQPLSDWVVAQDCSGTNNMLWKWVSQHRLFHLESQKCLGLDITKATDNLRMFSCDSTVMLWWKCEHHSLYTAAQYRLALKDGYAVANTNTSDVWKKGGSEENLCAQPYHEIYTRDGNSYGRPCEFPFLIGETWYHDCIHDEDHSGPWCATTLSYEYDQKWGICLLPESGCEGNWEKNEQIGSCYQFNNQEILSWKEAYVSCQNQGADLLSIHSAAELAYITGKEDIARLVWLGLNQLYSARGWEWSDFRPLKFLNWDPGTPVAPVIGGSSCARMDTESGLWQSVSCESQQPYVCKKPLNNTLELPDVWTYTDTHCHVGWLPNNGFCYLLANESSSWDAAHLKCKAFGADLISMHSLADVEVVVTKLHNGDVKKEIWTGLKNTNSPALFQWSDGTEVTLTYWNENEPSVPFNKTPNCVSYLGKLGQWKVQSCEKKLRYVCKKKGEITKDAESDKLCPPDEGWKRHGETCYKIYEKEAPFGTNCNLTITSRFEQEFLNYMMKNYDKSLRKYFWTGLRDPDSRGEYSWAVAQGVKQAVTFSNWNFLEPASPGGCVAMSTGKTLGKWEVKNCRSFRALSICKKVSEPQEPEEAAPKPDDPCPEGWHTFPSSLSCYKVFHIERIVRKRNWEEAERFCQALGAHLPSFSRREEIKDFVHLLKDQFSGQRWLWIGLNKRSPDLQGSWQWSDRTPVSAVMMEPEFQQDFDIRDCAAIKVLDVPWRRVWHLYEDKDYAYWKPFACDAKLEWVCQIPKGSTPQMPDWYNPERTGIHGPPVIIEGSEYWFVADPHLNYEEAVLYCASNHSFLATITSFTGLKAIKNKLANISGEEQKWWVKTSENPIDRYFLGSRRRLWHHFPMTFGDECLHMSAKTWLVDLSKRADCNAKLPFICERYNVSSLEKYSPDPAAKVQCTEKWIPFQNKCFLKVNSGPVTFSQASGICHSYGGTLPSVLSRGEQDFIISLLPEMEASLWIGLRWTAYERINRWTDNRELTYSNFHPLLVGRRLSIPTNFFDDESHFHCALILNLKKSPLTGTWNFTSCSERHSLSLCQKYSETEDGQPWENTSKTVKYLNNLYKIISKPLTWHGALKECMKEKMRLVSITDPYQQAFLAVQATLRNSSFWIGLSSQDDELNFGWSDGKRLQFSNWAGSNEQLDDCVILDTDGFWKTADCDDNQPGAICYYPGNETEEEVRALDTAKCPSPVQSTPWIPFQNSCYNFMITNNRHKTVTPEEVQSTCEKLHSKAHSLSIRNEEENTFVVEQLLYFNYIASWVMLGITYENNSLMWFDKTALSYTHWRTGRPTVKNGKFLAGLSTDGFWDIQSFNVIEETLHFYQHSISACKIEMVDYEDKHNGTLPQFIPYKDGVYSVIQKKVTWYEALNACSQSGGELASVHNPNGKLFLEDIVNRDGFPLWVGLSSHDGSESSFEWSDGRAFDYVPWQSLQSPGDCVVLYPKGIWRREKCLSVKDGAICYKPTKDKKLIFHVKSSKCPVAKRDGPQWVQYGGHCYASDQVLHSFSEAKQVCQELDHSATVVTIADENENKFVSRLMRENYNITMRVWLGLSQHSLDQSWSWLDGLDVTFVKWENKTKDGDGKCSILIASNETWRKVHCSRGYARAVCKIPLSPDYTGIAILFAVLCLLGLISLAIWFLLQRSHIRWTGFSSVRYEHGTNEDEVMLPSFHD</sequence>
<evidence type="ECO:0000250" key="1"/>
<evidence type="ECO:0000250" key="2">
    <source>
        <dbReference type="UniProtKB" id="O60449"/>
    </source>
</evidence>
<evidence type="ECO:0000255" key="3"/>
<evidence type="ECO:0000255" key="4">
    <source>
        <dbReference type="PROSITE-ProRule" id="PRU00040"/>
    </source>
</evidence>
<evidence type="ECO:0000255" key="5">
    <source>
        <dbReference type="PROSITE-ProRule" id="PRU00174"/>
    </source>
</evidence>
<evidence type="ECO:0000255" key="6">
    <source>
        <dbReference type="PROSITE-ProRule" id="PRU00479"/>
    </source>
</evidence>
<evidence type="ECO:0000269" key="7">
    <source>
    </source>
</evidence>
<evidence type="ECO:0000269" key="8">
    <source>
    </source>
</evidence>
<evidence type="ECO:0000269" key="9">
    <source>
    </source>
</evidence>
<evidence type="ECO:0000269" key="10">
    <source>
    </source>
</evidence>
<evidence type="ECO:0000305" key="11"/>
<evidence type="ECO:0000312" key="12">
    <source>
        <dbReference type="EMBL" id="AAA80215.1"/>
    </source>
</evidence>
<evidence type="ECO:0007744" key="13">
    <source>
    </source>
</evidence>
<name>LY75_MOUSE</name>
<organism evidence="12">
    <name type="scientific">Mus musculus</name>
    <name type="common">Mouse</name>
    <dbReference type="NCBI Taxonomy" id="10090"/>
    <lineage>
        <taxon>Eukaryota</taxon>
        <taxon>Metazoa</taxon>
        <taxon>Chordata</taxon>
        <taxon>Craniata</taxon>
        <taxon>Vertebrata</taxon>
        <taxon>Euteleostomi</taxon>
        <taxon>Mammalia</taxon>
        <taxon>Eutheria</taxon>
        <taxon>Euarchontoglires</taxon>
        <taxon>Glires</taxon>
        <taxon>Rodentia</taxon>
        <taxon>Myomorpha</taxon>
        <taxon>Muroidea</taxon>
        <taxon>Muridae</taxon>
        <taxon>Murinae</taxon>
        <taxon>Mus</taxon>
        <taxon>Mus</taxon>
    </lineage>
</organism>
<protein>
    <recommendedName>
        <fullName>Lymphocyte antigen 75</fullName>
        <shortName>Ly-75</shortName>
    </recommendedName>
    <alternativeName>
        <fullName>DEC-205</fullName>
    </alternativeName>
    <cdAntigenName>CD205</cdAntigenName>
</protein>
<keyword id="KW-0903">Direct protein sequencing</keyword>
<keyword id="KW-1015">Disulfide bond</keyword>
<keyword id="KW-0254">Endocytosis</keyword>
<keyword id="KW-0325">Glycoprotein</keyword>
<keyword id="KW-0430">Lectin</keyword>
<keyword id="KW-0472">Membrane</keyword>
<keyword id="KW-0597">Phosphoprotein</keyword>
<keyword id="KW-0675">Receptor</keyword>
<keyword id="KW-1185">Reference proteome</keyword>
<keyword id="KW-0677">Repeat</keyword>
<keyword id="KW-0732">Signal</keyword>
<keyword id="KW-0812">Transmembrane</keyword>
<keyword id="KW-1133">Transmembrane helix</keyword>
<gene>
    <name type="primary">Ly75</name>
    <name type="synonym">Cd205</name>
</gene>
<feature type="signal peptide" evidence="9 10">
    <location>
        <begin position="1"/>
        <end position="27"/>
    </location>
</feature>
<feature type="chain" id="PRO_0000017554" description="Lymphocyte antigen 75">
    <location>
        <begin position="28"/>
        <end position="1723"/>
    </location>
</feature>
<feature type="topological domain" description="Extracellular" evidence="3">
    <location>
        <begin position="28"/>
        <end position="1667"/>
    </location>
</feature>
<feature type="transmembrane region" description="Helical" evidence="3">
    <location>
        <begin position="1668"/>
        <end position="1692"/>
    </location>
</feature>
<feature type="topological domain" description="Cytoplasmic" evidence="3">
    <location>
        <begin position="1693"/>
        <end position="1723"/>
    </location>
</feature>
<feature type="domain" description="Ricin B-type lectin" evidence="5">
    <location>
        <begin position="33"/>
        <end position="182"/>
    </location>
</feature>
<feature type="domain" description="Fibronectin type-II" evidence="6">
    <location>
        <begin position="164"/>
        <end position="211"/>
    </location>
</feature>
<feature type="domain" description="C-type lectin 1" evidence="4">
    <location>
        <begin position="225"/>
        <end position="341"/>
    </location>
</feature>
<feature type="domain" description="C-type lectin 2" evidence="4">
    <location>
        <begin position="368"/>
        <end position="486"/>
    </location>
</feature>
<feature type="domain" description="C-type lectin 3" evidence="4">
    <location>
        <begin position="493"/>
        <end position="625"/>
    </location>
</feature>
<feature type="domain" description="C-type lectin 4" evidence="4">
    <location>
        <begin position="652"/>
        <end position="791"/>
    </location>
</feature>
<feature type="domain" description="C-type lectin 5" evidence="4">
    <location>
        <begin position="959"/>
        <end position="1092"/>
    </location>
</feature>
<feature type="domain" description="C-type lectin 6" evidence="4">
    <location>
        <begin position="1111"/>
        <end position="1223"/>
    </location>
</feature>
<feature type="domain" description="C-type lectin 7" evidence="4">
    <location>
        <begin position="1252"/>
        <end position="1375"/>
    </location>
</feature>
<feature type="domain" description="C-type lectin 8" evidence="4">
    <location>
        <begin position="1402"/>
        <end position="1514"/>
    </location>
</feature>
<feature type="domain" description="C-type lectin 9" evidence="4">
    <location>
        <begin position="1543"/>
        <end position="1662"/>
    </location>
</feature>
<feature type="modified residue" description="Phosphotyrosine" evidence="2">
    <location>
        <position position="934"/>
    </location>
</feature>
<feature type="modified residue" description="Phosphoserine" evidence="13">
    <location>
        <position position="1704"/>
    </location>
</feature>
<feature type="modified residue" description="Phosphoserine" evidence="13">
    <location>
        <position position="1720"/>
    </location>
</feature>
<feature type="glycosylation site" description="N-linked (GlcNAc...) asparagine" evidence="3">
    <location>
        <position position="135"/>
    </location>
</feature>
<feature type="glycosylation site" description="N-linked (GlcNAc...) asparagine" evidence="3">
    <location>
        <position position="345"/>
    </location>
</feature>
<feature type="glycosylation site" description="N-linked (GlcNAc...) asparagine" evidence="3">
    <location>
        <position position="377"/>
    </location>
</feature>
<feature type="glycosylation site" description="N-linked (GlcNAc...) asparagine" evidence="7">
    <location>
        <position position="529"/>
    </location>
</feature>
<feature type="glycosylation site" description="N-linked (GlcNAc...) asparagine" evidence="3">
    <location>
        <position position="843"/>
    </location>
</feature>
<feature type="glycosylation site" description="N-linked (GlcNAc...) asparagine" evidence="7 8">
    <location>
        <position position="865"/>
    </location>
</feature>
<feature type="glycosylation site" description="N-linked (GlcNAc...) asparagine" evidence="3">
    <location>
        <position position="935"/>
    </location>
</feature>
<feature type="glycosylation site" description="N-linked (GlcNAc...) asparagine" evidence="7">
    <location>
        <position position="1077"/>
    </location>
</feature>
<feature type="glycosylation site" description="N-linked (GlcNAc...) asparagine" evidence="7">
    <location>
        <position position="1104"/>
    </location>
</feature>
<feature type="glycosylation site" description="N-linked (GlcNAc...) asparagine" evidence="3">
    <location>
        <position position="1226"/>
    </location>
</feature>
<feature type="glycosylation site" description="N-linked (GlcNAc...) asparagine" evidence="3">
    <location>
        <position position="1321"/>
    </location>
</feature>
<feature type="glycosylation site" description="N-linked (GlcNAc...) asparagine" evidence="3">
    <location>
        <position position="1393"/>
    </location>
</feature>
<feature type="glycosylation site" description="N-linked (GlcNAc...) asparagine" evidence="3">
    <location>
        <position position="1594"/>
    </location>
</feature>
<feature type="glycosylation site" description="N-linked (GlcNAc...) asparagine" evidence="3">
    <location>
        <position position="1627"/>
    </location>
</feature>
<feature type="disulfide bond" evidence="1">
    <location>
        <begin position="169"/>
        <end position="194"/>
    </location>
</feature>
<feature type="disulfide bond" evidence="1">
    <location>
        <begin position="183"/>
        <end position="209"/>
    </location>
</feature>
<feature type="disulfide bond" evidence="1">
    <location>
        <begin position="247"/>
        <end position="340"/>
    </location>
</feature>
<feature type="disulfide bond" evidence="1">
    <location>
        <begin position="317"/>
        <end position="332"/>
    </location>
</feature>
<feature type="disulfide bond" evidence="1">
    <location>
        <begin position="389"/>
        <end position="485"/>
    </location>
</feature>
<feature type="disulfide bond" evidence="1">
    <location>
        <begin position="462"/>
        <end position="477"/>
    </location>
</feature>
<feature type="disulfide bond" evidence="1">
    <location>
        <begin position="597"/>
        <end position="614"/>
    </location>
</feature>
<feature type="disulfide bond" evidence="1">
    <location>
        <begin position="678"/>
        <end position="790"/>
    </location>
</feature>
<feature type="disulfide bond" evidence="1">
    <location>
        <begin position="752"/>
        <end position="782"/>
    </location>
</feature>
<feature type="disulfide bond" evidence="1">
    <location>
        <begin position="1061"/>
        <end position="1081"/>
    </location>
</feature>
<feature type="disulfide bond" evidence="1">
    <location>
        <begin position="1198"/>
        <end position="1212"/>
    </location>
</feature>
<feature type="disulfide bond" evidence="1">
    <location>
        <begin position="1489"/>
        <end position="1503"/>
    </location>
</feature>
<feature type="disulfide bond" evidence="1">
    <location>
        <begin position="1636"/>
        <end position="1651"/>
    </location>
</feature>
<feature type="sequence conflict" description="In Ref. 5; AA sequence." evidence="11" ref="5">
    <original>S</original>
    <variation>F</variation>
    <location>
        <position position="51"/>
    </location>
</feature>
<feature type="sequence conflict" description="In Ref. 1; AAA80215." evidence="11" ref="1">
    <original>S</original>
    <variation>P</variation>
    <location>
        <position position="1283"/>
    </location>
</feature>
<proteinExistence type="evidence at protein level"/>
<comment type="function">
    <text evidence="1">Acts as an endocytic receptor to direct captured antigens from the extracellular space to a specialized antigen-processing compartment. Causes reduced proliferation of B lymphocytes (By similarity).</text>
</comment>
<comment type="subcellular location">
    <subcellularLocation>
        <location evidence="9">Membrane</location>
        <topology evidence="9">Single-pass type I membrane protein</topology>
    </subcellularLocation>
</comment>
<comment type="tissue specificity">
    <text evidence="9 10">Expressed in dendritic and thymic epithelial cells and lymph nodes.</text>
</comment>
<comment type="PTM">
    <text evidence="7 8 9 10">N-glycosylated.</text>
</comment>
<comment type="online information" name="Functional Glycomics Gateway - Glycan Binding">
    <link uri="http://www.functionalglycomics.org/glycomics/GBPServlet?&amp;operationType=view&amp;cbpId=cbp_mou_Ctlect_180"/>
    <text>DEC-205</text>
</comment>
<reference evidence="11" key="1">
    <citation type="journal article" date="1995" name="Nature">
        <title>The receptor DEC-205 expressed by dendritic cells and thymic epithelial cells is involved in antigen processing.</title>
        <authorList>
            <person name="Jiang W."/>
            <person name="Swiggard W.J."/>
            <person name="Heufler C."/>
            <person name="Peng M."/>
            <person name="Mirza A."/>
            <person name="Steinman R.M."/>
            <person name="Nussenzweig M.C."/>
        </authorList>
    </citation>
    <scope>NUCLEOTIDE SEQUENCE [MRNA]</scope>
    <scope>PARTIAL PROTEIN SEQUENCE</scope>
    <scope>TISSUE SPECIFICITY</scope>
    <scope>GLYCOSYLATION</scope>
    <source>
        <strain>BALB/cJ</strain>
        <tissue>Dendritic cell</tissue>
        <tissue>Thymus</tissue>
    </source>
</reference>
<reference evidence="11" key="2">
    <citation type="submission" date="2001-06" db="EMBL/GenBank/DDBJ databases">
        <authorList>
            <person name="Park C.G."/>
            <person name="Steinman R.M."/>
        </authorList>
    </citation>
    <scope>NUCLEOTIDE SEQUENCE [MRNA]</scope>
    <source>
        <strain>C57BL/6J</strain>
        <tissue>Spleen</tissue>
    </source>
</reference>
<reference key="3">
    <citation type="journal article" date="2005" name="Science">
        <title>The transcriptional landscape of the mammalian genome.</title>
        <authorList>
            <person name="Carninci P."/>
            <person name="Kasukawa T."/>
            <person name="Katayama S."/>
            <person name="Gough J."/>
            <person name="Frith M.C."/>
            <person name="Maeda N."/>
            <person name="Oyama R."/>
            <person name="Ravasi T."/>
            <person name="Lenhard B."/>
            <person name="Wells C."/>
            <person name="Kodzius R."/>
            <person name="Shimokawa K."/>
            <person name="Bajic V.B."/>
            <person name="Brenner S.E."/>
            <person name="Batalov S."/>
            <person name="Forrest A.R."/>
            <person name="Zavolan M."/>
            <person name="Davis M.J."/>
            <person name="Wilming L.G."/>
            <person name="Aidinis V."/>
            <person name="Allen J.E."/>
            <person name="Ambesi-Impiombato A."/>
            <person name="Apweiler R."/>
            <person name="Aturaliya R.N."/>
            <person name="Bailey T.L."/>
            <person name="Bansal M."/>
            <person name="Baxter L."/>
            <person name="Beisel K.W."/>
            <person name="Bersano T."/>
            <person name="Bono H."/>
            <person name="Chalk A.M."/>
            <person name="Chiu K.P."/>
            <person name="Choudhary V."/>
            <person name="Christoffels A."/>
            <person name="Clutterbuck D.R."/>
            <person name="Crowe M.L."/>
            <person name="Dalla E."/>
            <person name="Dalrymple B.P."/>
            <person name="de Bono B."/>
            <person name="Della Gatta G."/>
            <person name="di Bernardo D."/>
            <person name="Down T."/>
            <person name="Engstrom P."/>
            <person name="Fagiolini M."/>
            <person name="Faulkner G."/>
            <person name="Fletcher C.F."/>
            <person name="Fukushima T."/>
            <person name="Furuno M."/>
            <person name="Futaki S."/>
            <person name="Gariboldi M."/>
            <person name="Georgii-Hemming P."/>
            <person name="Gingeras T.R."/>
            <person name="Gojobori T."/>
            <person name="Green R.E."/>
            <person name="Gustincich S."/>
            <person name="Harbers M."/>
            <person name="Hayashi Y."/>
            <person name="Hensch T.K."/>
            <person name="Hirokawa N."/>
            <person name="Hill D."/>
            <person name="Huminiecki L."/>
            <person name="Iacono M."/>
            <person name="Ikeo K."/>
            <person name="Iwama A."/>
            <person name="Ishikawa T."/>
            <person name="Jakt M."/>
            <person name="Kanapin A."/>
            <person name="Katoh M."/>
            <person name="Kawasawa Y."/>
            <person name="Kelso J."/>
            <person name="Kitamura H."/>
            <person name="Kitano H."/>
            <person name="Kollias G."/>
            <person name="Krishnan S.P."/>
            <person name="Kruger A."/>
            <person name="Kummerfeld S.K."/>
            <person name="Kurochkin I.V."/>
            <person name="Lareau L.F."/>
            <person name="Lazarevic D."/>
            <person name="Lipovich L."/>
            <person name="Liu J."/>
            <person name="Liuni S."/>
            <person name="McWilliam S."/>
            <person name="Madan Babu M."/>
            <person name="Madera M."/>
            <person name="Marchionni L."/>
            <person name="Matsuda H."/>
            <person name="Matsuzawa S."/>
            <person name="Miki H."/>
            <person name="Mignone F."/>
            <person name="Miyake S."/>
            <person name="Morris K."/>
            <person name="Mottagui-Tabar S."/>
            <person name="Mulder N."/>
            <person name="Nakano N."/>
            <person name="Nakauchi H."/>
            <person name="Ng P."/>
            <person name="Nilsson R."/>
            <person name="Nishiguchi S."/>
            <person name="Nishikawa S."/>
            <person name="Nori F."/>
            <person name="Ohara O."/>
            <person name="Okazaki Y."/>
            <person name="Orlando V."/>
            <person name="Pang K.C."/>
            <person name="Pavan W.J."/>
            <person name="Pavesi G."/>
            <person name="Pesole G."/>
            <person name="Petrovsky N."/>
            <person name="Piazza S."/>
            <person name="Reed J."/>
            <person name="Reid J.F."/>
            <person name="Ring B.Z."/>
            <person name="Ringwald M."/>
            <person name="Rost B."/>
            <person name="Ruan Y."/>
            <person name="Salzberg S.L."/>
            <person name="Sandelin A."/>
            <person name="Schneider C."/>
            <person name="Schoenbach C."/>
            <person name="Sekiguchi K."/>
            <person name="Semple C.A."/>
            <person name="Seno S."/>
            <person name="Sessa L."/>
            <person name="Sheng Y."/>
            <person name="Shibata Y."/>
            <person name="Shimada H."/>
            <person name="Shimada K."/>
            <person name="Silva D."/>
            <person name="Sinclair B."/>
            <person name="Sperling S."/>
            <person name="Stupka E."/>
            <person name="Sugiura K."/>
            <person name="Sultana R."/>
            <person name="Takenaka Y."/>
            <person name="Taki K."/>
            <person name="Tammoja K."/>
            <person name="Tan S.L."/>
            <person name="Tang S."/>
            <person name="Taylor M.S."/>
            <person name="Tegner J."/>
            <person name="Teichmann S.A."/>
            <person name="Ueda H.R."/>
            <person name="van Nimwegen E."/>
            <person name="Verardo R."/>
            <person name="Wei C.L."/>
            <person name="Yagi K."/>
            <person name="Yamanishi H."/>
            <person name="Zabarovsky E."/>
            <person name="Zhu S."/>
            <person name="Zimmer A."/>
            <person name="Hide W."/>
            <person name="Bult C."/>
            <person name="Grimmond S.M."/>
            <person name="Teasdale R.D."/>
            <person name="Liu E.T."/>
            <person name="Brusic V."/>
            <person name="Quackenbush J."/>
            <person name="Wahlestedt C."/>
            <person name="Mattick J.S."/>
            <person name="Hume D.A."/>
            <person name="Kai C."/>
            <person name="Sasaki D."/>
            <person name="Tomaru Y."/>
            <person name="Fukuda S."/>
            <person name="Kanamori-Katayama M."/>
            <person name="Suzuki M."/>
            <person name="Aoki J."/>
            <person name="Arakawa T."/>
            <person name="Iida J."/>
            <person name="Imamura K."/>
            <person name="Itoh M."/>
            <person name="Kato T."/>
            <person name="Kawaji H."/>
            <person name="Kawagashira N."/>
            <person name="Kawashima T."/>
            <person name="Kojima M."/>
            <person name="Kondo S."/>
            <person name="Konno H."/>
            <person name="Nakano K."/>
            <person name="Ninomiya N."/>
            <person name="Nishio T."/>
            <person name="Okada M."/>
            <person name="Plessy C."/>
            <person name="Shibata K."/>
            <person name="Shiraki T."/>
            <person name="Suzuki S."/>
            <person name="Tagami M."/>
            <person name="Waki K."/>
            <person name="Watahiki A."/>
            <person name="Okamura-Oho Y."/>
            <person name="Suzuki H."/>
            <person name="Kawai J."/>
            <person name="Hayashizaki Y."/>
        </authorList>
    </citation>
    <scope>NUCLEOTIDE SEQUENCE [LARGE SCALE MRNA] OF 1-485</scope>
    <source>
        <strain>C57BL/6J</strain>
    </source>
</reference>
<reference key="4">
    <citation type="journal article" date="2004" name="Genome Res.">
        <title>The status, quality, and expansion of the NIH full-length cDNA project: the Mammalian Gene Collection (MGC).</title>
        <authorList>
            <consortium name="The MGC Project Team"/>
        </authorList>
    </citation>
    <scope>NUCLEOTIDE SEQUENCE [LARGE SCALE MRNA]</scope>
    <source>
        <tissue>Brain</tissue>
    </source>
</reference>
<reference evidence="11" key="5">
    <citation type="journal article" date="1995" name="Cell. Immunol.">
        <title>DEC-205, a 205-kDa protein abundant on mouse dendritic cells and thymic epithelium that is detected by the monoclonal antibody NLDC-145: purification, characterization, and N-terminal amino acid sequence.</title>
        <authorList>
            <person name="Swiggard W.J."/>
            <person name="Mirza A."/>
            <person name="Nussenzweig M.C."/>
            <person name="Steinman R.M."/>
        </authorList>
    </citation>
    <scope>PROTEIN SEQUENCE OF 28-52</scope>
    <scope>SUBCELLULAR LOCATION</scope>
    <scope>TISSUE SPECIFICITY</scope>
    <scope>GLYCOSYLATION</scope>
    <source>
        <strain>BALB/cJ</strain>
        <tissue>Thymus</tissue>
    </source>
</reference>
<reference key="6">
    <citation type="journal article" date="2009" name="Mol. Cell. Proteomics">
        <title>The mouse C2C12 myoblast cell surface N-linked glycoproteome: identification, glycosite occupancy, and membrane orientation.</title>
        <authorList>
            <person name="Gundry R.L."/>
            <person name="Raginski K."/>
            <person name="Tarasova Y."/>
            <person name="Tchernyshyov I."/>
            <person name="Bausch-Fluck D."/>
            <person name="Elliott S.T."/>
            <person name="Boheler K.R."/>
            <person name="Van Eyk J.E."/>
            <person name="Wollscheid B."/>
        </authorList>
    </citation>
    <scope>GLYCOSYLATION [LARGE SCALE ANALYSIS] AT ASN-865</scope>
    <source>
        <tissue>Myoblast</tissue>
    </source>
</reference>
<reference key="7">
    <citation type="journal article" date="2009" name="Nat. Biotechnol.">
        <title>Mass-spectrometric identification and relative quantification of N-linked cell surface glycoproteins.</title>
        <authorList>
            <person name="Wollscheid B."/>
            <person name="Bausch-Fluck D."/>
            <person name="Henderson C."/>
            <person name="O'Brien R."/>
            <person name="Bibel M."/>
            <person name="Schiess R."/>
            <person name="Aebersold R."/>
            <person name="Watts J.D."/>
        </authorList>
    </citation>
    <scope>GLYCOSYLATION [LARGE SCALE ANALYSIS] AT ASN-529; ASN-865; ASN-1077 AND ASN-1104</scope>
</reference>
<reference key="8">
    <citation type="journal article" date="2010" name="Cell">
        <title>A tissue-specific atlas of mouse protein phosphorylation and expression.</title>
        <authorList>
            <person name="Huttlin E.L."/>
            <person name="Jedrychowski M.P."/>
            <person name="Elias J.E."/>
            <person name="Goswami T."/>
            <person name="Rad R."/>
            <person name="Beausoleil S.A."/>
            <person name="Villen J."/>
            <person name="Haas W."/>
            <person name="Sowa M.E."/>
            <person name="Gygi S.P."/>
        </authorList>
    </citation>
    <scope>PHOSPHORYLATION [LARGE SCALE ANALYSIS] AT SER-1704 AND SER-1720</scope>
    <scope>IDENTIFICATION BY MASS SPECTROMETRY [LARGE SCALE ANALYSIS]</scope>
    <source>
        <tissue>Lung</tissue>
        <tissue>Spleen</tissue>
    </source>
</reference>
<dbReference type="EMBL" id="U19271">
    <property type="protein sequence ID" value="AAA80215.1"/>
    <property type="molecule type" value="mRNA"/>
</dbReference>
<dbReference type="EMBL" id="AF395445">
    <property type="protein sequence ID" value="AAK81722.1"/>
    <property type="molecule type" value="mRNA"/>
</dbReference>
<dbReference type="EMBL" id="AK049301">
    <property type="protein sequence ID" value="BAC33668.1"/>
    <property type="molecule type" value="mRNA"/>
</dbReference>
<dbReference type="EMBL" id="BC150734">
    <property type="protein sequence ID" value="AAI50735.1"/>
    <property type="molecule type" value="mRNA"/>
</dbReference>
<dbReference type="CCDS" id="CCDS38126.1"/>
<dbReference type="PIR" id="S58880">
    <property type="entry name" value="S58880"/>
</dbReference>
<dbReference type="RefSeq" id="NP_038853.2">
    <property type="nucleotide sequence ID" value="NM_013825.4"/>
</dbReference>
<dbReference type="SMR" id="Q60767"/>
<dbReference type="BioGRID" id="201246">
    <property type="interactions" value="2"/>
</dbReference>
<dbReference type="FunCoup" id="Q60767">
    <property type="interactions" value="258"/>
</dbReference>
<dbReference type="STRING" id="10090.ENSMUSP00000028362"/>
<dbReference type="GlyConnect" id="2488">
    <property type="glycosylation" value="1 N-Linked glycan (1 site)"/>
</dbReference>
<dbReference type="GlyCosmos" id="Q60767">
    <property type="glycosylation" value="14 sites, 1 glycan"/>
</dbReference>
<dbReference type="GlyGen" id="Q60767">
    <property type="glycosylation" value="17 sites, 7 N-linked glycans (7 sites), 1 O-linked glycan (1 site)"/>
</dbReference>
<dbReference type="iPTMnet" id="Q60767"/>
<dbReference type="PhosphoSitePlus" id="Q60767"/>
<dbReference type="SwissPalm" id="Q60767"/>
<dbReference type="PaxDb" id="10090-ENSMUSP00000108152"/>
<dbReference type="PeptideAtlas" id="Q60767"/>
<dbReference type="ProteomicsDB" id="295733"/>
<dbReference type="Pumba" id="Q60767"/>
<dbReference type="DNASU" id="17076"/>
<dbReference type="Ensembl" id="ENSMUST00000028362.9">
    <property type="protein sequence ID" value="ENSMUSP00000028362.9"/>
    <property type="gene ID" value="ENSMUSG00000026980.16"/>
</dbReference>
<dbReference type="GeneID" id="17076"/>
<dbReference type="KEGG" id="mmu:17076"/>
<dbReference type="UCSC" id="uc008jud.1">
    <property type="organism name" value="mouse"/>
</dbReference>
<dbReference type="AGR" id="MGI:106662"/>
<dbReference type="CTD" id="4065"/>
<dbReference type="MGI" id="MGI:106662">
    <property type="gene designation" value="Ly75"/>
</dbReference>
<dbReference type="VEuPathDB" id="HostDB:ENSMUSG00000026980"/>
<dbReference type="eggNOG" id="KOG4297">
    <property type="taxonomic scope" value="Eukaryota"/>
</dbReference>
<dbReference type="GeneTree" id="ENSGT01050000244842"/>
<dbReference type="HOGENOM" id="CLU_002069_2_0_1"/>
<dbReference type="InParanoid" id="Q60767"/>
<dbReference type="OMA" id="YHEIYTK"/>
<dbReference type="OrthoDB" id="4489at9989"/>
<dbReference type="BioGRID-ORCS" id="17076">
    <property type="hits" value="7 hits in 79 CRISPR screens"/>
</dbReference>
<dbReference type="PRO" id="PR:Q60767"/>
<dbReference type="Proteomes" id="UP000000589">
    <property type="component" value="Chromosome 2"/>
</dbReference>
<dbReference type="RNAct" id="Q60767">
    <property type="molecule type" value="protein"/>
</dbReference>
<dbReference type="Bgee" id="ENSMUSG00000026980">
    <property type="expression patterns" value="Expressed in brain blood vessel and 110 other cell types or tissues"/>
</dbReference>
<dbReference type="ExpressionAtlas" id="Q60767">
    <property type="expression patterns" value="baseline and differential"/>
</dbReference>
<dbReference type="GO" id="GO:0009897">
    <property type="term" value="C:external side of plasma membrane"/>
    <property type="evidence" value="ECO:0000314"/>
    <property type="project" value="MGI"/>
</dbReference>
<dbReference type="GO" id="GO:0030246">
    <property type="term" value="F:carbohydrate binding"/>
    <property type="evidence" value="ECO:0007669"/>
    <property type="project" value="UniProtKB-KW"/>
</dbReference>
<dbReference type="GO" id="GO:0006897">
    <property type="term" value="P:endocytosis"/>
    <property type="evidence" value="ECO:0007669"/>
    <property type="project" value="UniProtKB-KW"/>
</dbReference>
<dbReference type="CDD" id="cd00037">
    <property type="entry name" value="CLECT"/>
    <property type="match status" value="10"/>
</dbReference>
<dbReference type="CDD" id="cd00062">
    <property type="entry name" value="FN2"/>
    <property type="match status" value="1"/>
</dbReference>
<dbReference type="FunFam" id="3.10.100.10:FF:000036">
    <property type="entry name" value="Lymphocyte antigen 75"/>
    <property type="match status" value="1"/>
</dbReference>
<dbReference type="FunFam" id="3.10.100.10:FF:000052">
    <property type="entry name" value="Lymphocyte antigen 75"/>
    <property type="match status" value="1"/>
</dbReference>
<dbReference type="FunFam" id="3.10.100.10:FF:000060">
    <property type="entry name" value="Lymphocyte antigen 75"/>
    <property type="match status" value="1"/>
</dbReference>
<dbReference type="FunFam" id="3.10.100.10:FF:000063">
    <property type="entry name" value="Lymphocyte antigen 75"/>
    <property type="match status" value="1"/>
</dbReference>
<dbReference type="FunFam" id="3.10.100.10:FF:000066">
    <property type="entry name" value="Lymphocyte antigen 75"/>
    <property type="match status" value="1"/>
</dbReference>
<dbReference type="FunFam" id="3.10.100.10:FF:000047">
    <property type="entry name" value="lymphocyte antigen 75"/>
    <property type="match status" value="1"/>
</dbReference>
<dbReference type="FunFam" id="2.80.10.50:FF:000040">
    <property type="entry name" value="lymphocyte antigen 75 isoform X1"/>
    <property type="match status" value="1"/>
</dbReference>
<dbReference type="FunFam" id="3.10.100.10:FF:000067">
    <property type="entry name" value="lymphocyte antigen 75 isoform X1"/>
    <property type="match status" value="1"/>
</dbReference>
<dbReference type="FunFam" id="2.10.10.10:FF:000004">
    <property type="entry name" value="lymphocyte antigen 75 precursor"/>
    <property type="match status" value="1"/>
</dbReference>
<dbReference type="FunFam" id="3.10.100.10:FF:000043">
    <property type="entry name" value="lymphocyte antigen 75 precursor"/>
    <property type="match status" value="1"/>
</dbReference>
<dbReference type="FunFam" id="3.10.100.10:FF:000049">
    <property type="entry name" value="Lymphocyte antigen 75 variant"/>
    <property type="match status" value="1"/>
</dbReference>
<dbReference type="FunFam" id="3.10.100.10:FF:000051">
    <property type="entry name" value="Lymphocyte antigen 75 variant"/>
    <property type="match status" value="1"/>
</dbReference>
<dbReference type="Gene3D" id="2.80.10.50">
    <property type="match status" value="1"/>
</dbReference>
<dbReference type="Gene3D" id="2.10.10.10">
    <property type="entry name" value="Fibronectin, type II, collagen-binding"/>
    <property type="match status" value="1"/>
</dbReference>
<dbReference type="Gene3D" id="3.10.100.10">
    <property type="entry name" value="Mannose-Binding Protein A, subunit A"/>
    <property type="match status" value="10"/>
</dbReference>
<dbReference type="InterPro" id="IPR001304">
    <property type="entry name" value="C-type_lectin-like"/>
</dbReference>
<dbReference type="InterPro" id="IPR016186">
    <property type="entry name" value="C-type_lectin-like/link_sf"/>
</dbReference>
<dbReference type="InterPro" id="IPR050111">
    <property type="entry name" value="C-type_lectin/snaclec_domain"/>
</dbReference>
<dbReference type="InterPro" id="IPR018378">
    <property type="entry name" value="C-type_lectin_CS"/>
</dbReference>
<dbReference type="InterPro" id="IPR016187">
    <property type="entry name" value="CTDL_fold"/>
</dbReference>
<dbReference type="InterPro" id="IPR000562">
    <property type="entry name" value="FN_type2_dom"/>
</dbReference>
<dbReference type="InterPro" id="IPR036943">
    <property type="entry name" value="FN_type2_sf"/>
</dbReference>
<dbReference type="InterPro" id="IPR013806">
    <property type="entry name" value="Kringle-like"/>
</dbReference>
<dbReference type="InterPro" id="IPR035992">
    <property type="entry name" value="Ricin_B-like_lectins"/>
</dbReference>
<dbReference type="InterPro" id="IPR000772">
    <property type="entry name" value="Ricin_B_lectin"/>
</dbReference>
<dbReference type="PANTHER" id="PTHR22803">
    <property type="entry name" value="MANNOSE, PHOSPHOLIPASE, LECTIN RECEPTOR RELATED"/>
    <property type="match status" value="1"/>
</dbReference>
<dbReference type="Pfam" id="PF24562">
    <property type="entry name" value="CysR_MRC2_N"/>
    <property type="match status" value="1"/>
</dbReference>
<dbReference type="Pfam" id="PF00040">
    <property type="entry name" value="fn2"/>
    <property type="match status" value="1"/>
</dbReference>
<dbReference type="Pfam" id="PF00059">
    <property type="entry name" value="Lectin_C"/>
    <property type="match status" value="9"/>
</dbReference>
<dbReference type="SMART" id="SM00034">
    <property type="entry name" value="CLECT"/>
    <property type="match status" value="10"/>
</dbReference>
<dbReference type="SMART" id="SM00059">
    <property type="entry name" value="FN2"/>
    <property type="match status" value="1"/>
</dbReference>
<dbReference type="SMART" id="SM00458">
    <property type="entry name" value="RICIN"/>
    <property type="match status" value="1"/>
</dbReference>
<dbReference type="SUPFAM" id="SSF56436">
    <property type="entry name" value="C-type lectin-like"/>
    <property type="match status" value="10"/>
</dbReference>
<dbReference type="SUPFAM" id="SSF57440">
    <property type="entry name" value="Kringle-like"/>
    <property type="match status" value="1"/>
</dbReference>
<dbReference type="SUPFAM" id="SSF50370">
    <property type="entry name" value="Ricin B-like lectins"/>
    <property type="match status" value="1"/>
</dbReference>
<dbReference type="PROSITE" id="PS00615">
    <property type="entry name" value="C_TYPE_LECTIN_1"/>
    <property type="match status" value="2"/>
</dbReference>
<dbReference type="PROSITE" id="PS50041">
    <property type="entry name" value="C_TYPE_LECTIN_2"/>
    <property type="match status" value="9"/>
</dbReference>
<dbReference type="PROSITE" id="PS00023">
    <property type="entry name" value="FN2_1"/>
    <property type="match status" value="1"/>
</dbReference>
<dbReference type="PROSITE" id="PS51092">
    <property type="entry name" value="FN2_2"/>
    <property type="match status" value="1"/>
</dbReference>
<dbReference type="PROSITE" id="PS50231">
    <property type="entry name" value="RICIN_B_LECTIN"/>
    <property type="match status" value="1"/>
</dbReference>
<accession>Q60767</accession>
<accession>B2RWW5</accession>
<accession>Q8C7T3</accession>
<accession>Q91XL8</accession>
<accession>Q9QUZ6</accession>